<reference key="1">
    <citation type="journal article" date="2010" name="J. Bacteriol.">
        <title>Genome sequence of the deep-rooted Yersinia pestis strain Angola reveals new insights into the evolution and pangenome of the plague bacterium.</title>
        <authorList>
            <person name="Eppinger M."/>
            <person name="Worsham P.L."/>
            <person name="Nikolich M.P."/>
            <person name="Riley D.R."/>
            <person name="Sebastian Y."/>
            <person name="Mou S."/>
            <person name="Achtman M."/>
            <person name="Lindler L.E."/>
            <person name="Ravel J."/>
        </authorList>
    </citation>
    <scope>NUCLEOTIDE SEQUENCE [LARGE SCALE GENOMIC DNA]</scope>
    <source>
        <strain>Angola</strain>
    </source>
</reference>
<accession>A9R7J3</accession>
<proteinExistence type="inferred from homology"/>
<gene>
    <name evidence="1" type="primary">kdsB</name>
    <name type="ordered locus">YpAngola_A1965</name>
</gene>
<name>KDSB_YERPG</name>
<dbReference type="EC" id="2.7.7.38" evidence="1"/>
<dbReference type="EMBL" id="CP000901">
    <property type="protein sequence ID" value="ABX87322.1"/>
    <property type="molecule type" value="Genomic_DNA"/>
</dbReference>
<dbReference type="RefSeq" id="WP_002211314.1">
    <property type="nucleotide sequence ID" value="NZ_CP009935.1"/>
</dbReference>
<dbReference type="SMR" id="A9R7J3"/>
<dbReference type="GeneID" id="57977196"/>
<dbReference type="KEGG" id="ypg:YpAngola_A1965"/>
<dbReference type="PATRIC" id="fig|349746.12.peg.2941"/>
<dbReference type="UniPathway" id="UPA00030"/>
<dbReference type="UniPathway" id="UPA00358">
    <property type="reaction ID" value="UER00476"/>
</dbReference>
<dbReference type="GO" id="GO:0005829">
    <property type="term" value="C:cytosol"/>
    <property type="evidence" value="ECO:0007669"/>
    <property type="project" value="TreeGrafter"/>
</dbReference>
<dbReference type="GO" id="GO:0008690">
    <property type="term" value="F:3-deoxy-manno-octulosonate cytidylyltransferase activity"/>
    <property type="evidence" value="ECO:0007669"/>
    <property type="project" value="UniProtKB-UniRule"/>
</dbReference>
<dbReference type="GO" id="GO:0033468">
    <property type="term" value="P:CMP-keto-3-deoxy-D-manno-octulosonic acid biosynthetic process"/>
    <property type="evidence" value="ECO:0007669"/>
    <property type="project" value="UniProtKB-UniRule"/>
</dbReference>
<dbReference type="GO" id="GO:0009103">
    <property type="term" value="P:lipopolysaccharide biosynthetic process"/>
    <property type="evidence" value="ECO:0007669"/>
    <property type="project" value="UniProtKB-UniRule"/>
</dbReference>
<dbReference type="CDD" id="cd02517">
    <property type="entry name" value="CMP-KDO-Synthetase"/>
    <property type="match status" value="1"/>
</dbReference>
<dbReference type="FunFam" id="3.90.550.10:FF:000011">
    <property type="entry name" value="3-deoxy-manno-octulosonate cytidylyltransferase"/>
    <property type="match status" value="1"/>
</dbReference>
<dbReference type="Gene3D" id="3.90.550.10">
    <property type="entry name" value="Spore Coat Polysaccharide Biosynthesis Protein SpsA, Chain A"/>
    <property type="match status" value="1"/>
</dbReference>
<dbReference type="HAMAP" id="MF_00057">
    <property type="entry name" value="KdsB"/>
    <property type="match status" value="1"/>
</dbReference>
<dbReference type="InterPro" id="IPR003329">
    <property type="entry name" value="Cytidylyl_trans"/>
</dbReference>
<dbReference type="InterPro" id="IPR004528">
    <property type="entry name" value="KdsB"/>
</dbReference>
<dbReference type="InterPro" id="IPR029044">
    <property type="entry name" value="Nucleotide-diphossugar_trans"/>
</dbReference>
<dbReference type="NCBIfam" id="TIGR00466">
    <property type="entry name" value="kdsB"/>
    <property type="match status" value="1"/>
</dbReference>
<dbReference type="NCBIfam" id="NF003950">
    <property type="entry name" value="PRK05450.1-3"/>
    <property type="match status" value="1"/>
</dbReference>
<dbReference type="NCBIfam" id="NF003952">
    <property type="entry name" value="PRK05450.1-5"/>
    <property type="match status" value="1"/>
</dbReference>
<dbReference type="NCBIfam" id="NF009905">
    <property type="entry name" value="PRK13368.1"/>
    <property type="match status" value="1"/>
</dbReference>
<dbReference type="PANTHER" id="PTHR42866">
    <property type="entry name" value="3-DEOXY-MANNO-OCTULOSONATE CYTIDYLYLTRANSFERASE"/>
    <property type="match status" value="1"/>
</dbReference>
<dbReference type="PANTHER" id="PTHR42866:SF2">
    <property type="entry name" value="3-DEOXY-MANNO-OCTULOSONATE CYTIDYLYLTRANSFERASE, MITOCHONDRIAL"/>
    <property type="match status" value="1"/>
</dbReference>
<dbReference type="Pfam" id="PF02348">
    <property type="entry name" value="CTP_transf_3"/>
    <property type="match status" value="1"/>
</dbReference>
<dbReference type="SUPFAM" id="SSF53448">
    <property type="entry name" value="Nucleotide-diphospho-sugar transferases"/>
    <property type="match status" value="1"/>
</dbReference>
<sequence>MSFIAIIPARYASTRLPGKPLADIAGKPMVVHVMERALASGADRVIVATDHPDVVKAVEAAGGEVCLTRADHQSGTERLAEVIEHYGFADDDIIVNVQGDEPLVPPVIIRQVADNLAACSAGMATLAVPIASSEEAFNPNAVKVVMDAQGYALYFSRATIPWERERFAQSKETIGDCFLRHIGIYAYRAGFIRRYVNWAPSQLEQIELLEQLRVLWYGEKIHVAVAKAVPAVGVDTQSDLDRVRAIMLNQ</sequence>
<organism>
    <name type="scientific">Yersinia pestis bv. Antiqua (strain Angola)</name>
    <dbReference type="NCBI Taxonomy" id="349746"/>
    <lineage>
        <taxon>Bacteria</taxon>
        <taxon>Pseudomonadati</taxon>
        <taxon>Pseudomonadota</taxon>
        <taxon>Gammaproteobacteria</taxon>
        <taxon>Enterobacterales</taxon>
        <taxon>Yersiniaceae</taxon>
        <taxon>Yersinia</taxon>
    </lineage>
</organism>
<evidence type="ECO:0000255" key="1">
    <source>
        <dbReference type="HAMAP-Rule" id="MF_00057"/>
    </source>
</evidence>
<comment type="function">
    <text evidence="1">Activates KDO (a required 8-carbon sugar) for incorporation into bacterial lipopolysaccharide in Gram-negative bacteria.</text>
</comment>
<comment type="catalytic activity">
    <reaction evidence="1">
        <text>3-deoxy-alpha-D-manno-oct-2-ulosonate + CTP = CMP-3-deoxy-beta-D-manno-octulosonate + diphosphate</text>
        <dbReference type="Rhea" id="RHEA:23448"/>
        <dbReference type="ChEBI" id="CHEBI:33019"/>
        <dbReference type="ChEBI" id="CHEBI:37563"/>
        <dbReference type="ChEBI" id="CHEBI:85986"/>
        <dbReference type="ChEBI" id="CHEBI:85987"/>
        <dbReference type="EC" id="2.7.7.38"/>
    </reaction>
</comment>
<comment type="pathway">
    <text evidence="1">Nucleotide-sugar biosynthesis; CMP-3-deoxy-D-manno-octulosonate biosynthesis; CMP-3-deoxy-D-manno-octulosonate from 3-deoxy-D-manno-octulosonate and CTP: step 1/1.</text>
</comment>
<comment type="pathway">
    <text evidence="1">Bacterial outer membrane biogenesis; lipopolysaccharide biosynthesis.</text>
</comment>
<comment type="subcellular location">
    <subcellularLocation>
        <location evidence="1">Cytoplasm</location>
    </subcellularLocation>
</comment>
<comment type="similarity">
    <text evidence="1">Belongs to the KdsB family.</text>
</comment>
<feature type="chain" id="PRO_1000091916" description="3-deoxy-manno-octulosonate cytidylyltransferase">
    <location>
        <begin position="1"/>
        <end position="250"/>
    </location>
</feature>
<protein>
    <recommendedName>
        <fullName evidence="1">3-deoxy-manno-octulosonate cytidylyltransferase</fullName>
        <ecNumber evidence="1">2.7.7.38</ecNumber>
    </recommendedName>
    <alternativeName>
        <fullName evidence="1">CMP-2-keto-3-deoxyoctulosonic acid synthase</fullName>
        <shortName evidence="1">CKS</shortName>
        <shortName evidence="1">CMP-KDO synthase</shortName>
    </alternativeName>
</protein>
<keyword id="KW-0963">Cytoplasm</keyword>
<keyword id="KW-0448">Lipopolysaccharide biosynthesis</keyword>
<keyword id="KW-0548">Nucleotidyltransferase</keyword>
<keyword id="KW-0808">Transferase</keyword>